<proteinExistence type="inferred from homology"/>
<evidence type="ECO:0000255" key="1">
    <source>
        <dbReference type="HAMAP-Rule" id="MF_03180"/>
    </source>
</evidence>
<comment type="function">
    <text evidence="1">Component of the EKC/KEOPS complex that is required for the formation of a threonylcarbamoyl group on adenosine at position 37 (t(6)A37) in tRNAs that read codons beginning with adenine. The complex is probably involved in the transfer of the threonylcarbamoyl moiety of threonylcarbamoyl-AMP (TC-AMP) to the N6 group of A37. Osgep likely plays a direct catalytic role in this reaction, but requires other protein(s) of the complex to fulfill this activity.</text>
</comment>
<comment type="catalytic activity">
    <reaction evidence="1">
        <text>L-threonylcarbamoyladenylate + adenosine(37) in tRNA = N(6)-L-threonylcarbamoyladenosine(37) in tRNA + AMP + H(+)</text>
        <dbReference type="Rhea" id="RHEA:37059"/>
        <dbReference type="Rhea" id="RHEA-COMP:10162"/>
        <dbReference type="Rhea" id="RHEA-COMP:10163"/>
        <dbReference type="ChEBI" id="CHEBI:15378"/>
        <dbReference type="ChEBI" id="CHEBI:73682"/>
        <dbReference type="ChEBI" id="CHEBI:74411"/>
        <dbReference type="ChEBI" id="CHEBI:74418"/>
        <dbReference type="ChEBI" id="CHEBI:456215"/>
        <dbReference type="EC" id="2.3.1.234"/>
    </reaction>
</comment>
<comment type="cofactor">
    <cofactor evidence="1">
        <name>a divalent metal cation</name>
        <dbReference type="ChEBI" id="CHEBI:60240"/>
    </cofactor>
    <text evidence="1">Binds 1 divalent metal cation per subunit.</text>
</comment>
<comment type="subunit">
    <text evidence="1">Component of the EKC/KEOPS complex; the whole complex dimerizes.</text>
</comment>
<comment type="subcellular location">
    <subcellularLocation>
        <location evidence="1">Cytoplasm</location>
    </subcellularLocation>
    <subcellularLocation>
        <location evidence="1">Nucleus</location>
    </subcellularLocation>
</comment>
<comment type="similarity">
    <text evidence="1">Belongs to the KAE1 / TsaD family.</text>
</comment>
<reference key="1">
    <citation type="journal article" date="2007" name="Science">
        <title>Sea anemone genome reveals ancestral eumetazoan gene repertoire and genomic organization.</title>
        <authorList>
            <person name="Putnam N.H."/>
            <person name="Srivastava M."/>
            <person name="Hellsten U."/>
            <person name="Dirks B."/>
            <person name="Chapman J."/>
            <person name="Salamov A."/>
            <person name="Terry A."/>
            <person name="Shapiro H."/>
            <person name="Lindquist E."/>
            <person name="Kapitonov V.V."/>
            <person name="Jurka J."/>
            <person name="Genikhovich G."/>
            <person name="Grigoriev I.V."/>
            <person name="Lucas S.M."/>
            <person name="Steele R.E."/>
            <person name="Finnerty J.R."/>
            <person name="Technau U."/>
            <person name="Martindale M.Q."/>
            <person name="Rokhsar D.S."/>
        </authorList>
    </citation>
    <scope>NUCLEOTIDE SEQUENCE [LARGE SCALE GENOMIC DNA]</scope>
    <source>
        <strain>CH2 X CH6</strain>
    </source>
</reference>
<feature type="chain" id="PRO_0000331476" description="Probable tRNA N6-adenosine threonylcarbamoyltransferase">
    <location>
        <begin position="1"/>
        <end position="335"/>
    </location>
</feature>
<feature type="binding site" evidence="1">
    <location>
        <position position="109"/>
    </location>
    <ligand>
        <name>a divalent metal cation</name>
        <dbReference type="ChEBI" id="CHEBI:60240"/>
    </ligand>
</feature>
<feature type="binding site" evidence="1">
    <location>
        <position position="113"/>
    </location>
    <ligand>
        <name>a divalent metal cation</name>
        <dbReference type="ChEBI" id="CHEBI:60240"/>
    </ligand>
</feature>
<feature type="binding site" evidence="1">
    <location>
        <begin position="130"/>
        <end position="134"/>
    </location>
    <ligand>
        <name>substrate</name>
    </ligand>
</feature>
<feature type="binding site" evidence="1">
    <location>
        <position position="130"/>
    </location>
    <ligand>
        <name>a divalent metal cation</name>
        <dbReference type="ChEBI" id="CHEBI:60240"/>
    </ligand>
</feature>
<feature type="binding site" evidence="1">
    <location>
        <position position="162"/>
    </location>
    <ligand>
        <name>substrate</name>
    </ligand>
</feature>
<feature type="binding site" evidence="1">
    <location>
        <position position="177"/>
    </location>
    <ligand>
        <name>substrate</name>
    </ligand>
</feature>
<feature type="binding site" evidence="1">
    <location>
        <position position="181"/>
    </location>
    <ligand>
        <name>substrate</name>
    </ligand>
</feature>
<feature type="binding site" evidence="1">
    <location>
        <position position="266"/>
    </location>
    <ligand>
        <name>substrate</name>
    </ligand>
</feature>
<feature type="binding site" evidence="1">
    <location>
        <position position="294"/>
    </location>
    <ligand>
        <name>a divalent metal cation</name>
        <dbReference type="ChEBI" id="CHEBI:60240"/>
    </ligand>
</feature>
<organism>
    <name type="scientific">Nematostella vectensis</name>
    <name type="common">Starlet sea anemone</name>
    <dbReference type="NCBI Taxonomy" id="45351"/>
    <lineage>
        <taxon>Eukaryota</taxon>
        <taxon>Metazoa</taxon>
        <taxon>Cnidaria</taxon>
        <taxon>Anthozoa</taxon>
        <taxon>Hexacorallia</taxon>
        <taxon>Actiniaria</taxon>
        <taxon>Edwardsiidae</taxon>
        <taxon>Nematostella</taxon>
    </lineage>
</organism>
<gene>
    <name evidence="1" type="primary">osgep</name>
    <name type="ORF">v1g194666</name>
</gene>
<sequence>MPTVIGFEGSANKLGIGIIRDGVVLSNPRHTYITPPGQGFMPRDTAKHHQEHAIDILRRALDEAQIRPQDIDCICYTKGPGMGAPLVAVAVVARTVAQLWKKPIIGVNHCIGHIEMGRLITGANNPTVLYVSGGNTQVIAYLQKRYRIFGETIDIAVGNCLDRFARVLKLSNDPSPGYNIEQMAKKGKKLIELPYTVKGMDVSFSGILSYIECMAHKLLSSEECTPEDLCFSLQETVFAMLVETTERAMAHCGSNEVLIVGGVGCNKRLQEMMDVMAKERGAKLYATDERFCIDNGAMIAQAGWEMFQTGSVTPLEQTTCTQRFRTDEVEVTWRD</sequence>
<name>OSGEP_NEMVE</name>
<dbReference type="EC" id="2.3.1.234" evidence="1"/>
<dbReference type="EMBL" id="DS469901">
    <property type="protein sequence ID" value="EDO31427.1"/>
    <property type="molecule type" value="Genomic_DNA"/>
</dbReference>
<dbReference type="SMR" id="A7SXZ6"/>
<dbReference type="STRING" id="45351.A7SXZ6"/>
<dbReference type="EnsemblMetazoa" id="EDO31427">
    <property type="protein sequence ID" value="EDO31427"/>
    <property type="gene ID" value="NEMVEDRAFT_v1g194666"/>
</dbReference>
<dbReference type="GeneID" id="5502327"/>
<dbReference type="KEGG" id="nve:5502327"/>
<dbReference type="eggNOG" id="KOG2708">
    <property type="taxonomic scope" value="Eukaryota"/>
</dbReference>
<dbReference type="HOGENOM" id="CLU_023208_2_2_1"/>
<dbReference type="InParanoid" id="A7SXZ6"/>
<dbReference type="OMA" id="HHRSWVV"/>
<dbReference type="OrthoDB" id="10254073at2759"/>
<dbReference type="PhylomeDB" id="A7SXZ6"/>
<dbReference type="Proteomes" id="UP000001593">
    <property type="component" value="Unassembled WGS sequence"/>
</dbReference>
<dbReference type="GO" id="GO:0005737">
    <property type="term" value="C:cytoplasm"/>
    <property type="evidence" value="ECO:0000318"/>
    <property type="project" value="GO_Central"/>
</dbReference>
<dbReference type="GO" id="GO:0000408">
    <property type="term" value="C:EKC/KEOPS complex"/>
    <property type="evidence" value="ECO:0000318"/>
    <property type="project" value="GO_Central"/>
</dbReference>
<dbReference type="GO" id="GO:0005634">
    <property type="term" value="C:nucleus"/>
    <property type="evidence" value="ECO:0007669"/>
    <property type="project" value="UniProtKB-SubCell"/>
</dbReference>
<dbReference type="GO" id="GO:0046872">
    <property type="term" value="F:metal ion binding"/>
    <property type="evidence" value="ECO:0007669"/>
    <property type="project" value="UniProtKB-KW"/>
</dbReference>
<dbReference type="GO" id="GO:0061711">
    <property type="term" value="F:N(6)-L-threonylcarbamoyladenine synthase activity"/>
    <property type="evidence" value="ECO:0007669"/>
    <property type="project" value="UniProtKB-EC"/>
</dbReference>
<dbReference type="GO" id="GO:0002949">
    <property type="term" value="P:tRNA threonylcarbamoyladenosine modification"/>
    <property type="evidence" value="ECO:0007669"/>
    <property type="project" value="UniProtKB-UniRule"/>
</dbReference>
<dbReference type="CDD" id="cd24132">
    <property type="entry name" value="ASKHA_NBD_OSGEP_like_euk"/>
    <property type="match status" value="1"/>
</dbReference>
<dbReference type="FunFam" id="3.30.420.40:FF:000038">
    <property type="entry name" value="Probable tRNA N6-adenosine threonylcarbamoyltransferase"/>
    <property type="match status" value="1"/>
</dbReference>
<dbReference type="FunFam" id="3.30.420.40:FF:000295">
    <property type="entry name" value="Probable tRNA N6-adenosine threonylcarbamoyltransferase"/>
    <property type="match status" value="1"/>
</dbReference>
<dbReference type="Gene3D" id="3.30.420.40">
    <property type="match status" value="2"/>
</dbReference>
<dbReference type="HAMAP" id="MF_01446">
    <property type="entry name" value="Kae1"/>
    <property type="match status" value="1"/>
</dbReference>
<dbReference type="InterPro" id="IPR043129">
    <property type="entry name" value="ATPase_NBD"/>
</dbReference>
<dbReference type="InterPro" id="IPR000905">
    <property type="entry name" value="Gcp-like_dom"/>
</dbReference>
<dbReference type="InterPro" id="IPR017861">
    <property type="entry name" value="KAE1/TsaD"/>
</dbReference>
<dbReference type="InterPro" id="IPR034680">
    <property type="entry name" value="Kae1_archaea_euk"/>
</dbReference>
<dbReference type="InterPro" id="IPR017860">
    <property type="entry name" value="Peptidase_M22_CS"/>
</dbReference>
<dbReference type="NCBIfam" id="TIGR03722">
    <property type="entry name" value="arch_KAE1"/>
    <property type="match status" value="1"/>
</dbReference>
<dbReference type="NCBIfam" id="TIGR00329">
    <property type="entry name" value="gcp_kae1"/>
    <property type="match status" value="1"/>
</dbReference>
<dbReference type="PANTHER" id="PTHR11735">
    <property type="entry name" value="TRNA N6-ADENOSINE THREONYLCARBAMOYLTRANSFERASE"/>
    <property type="match status" value="1"/>
</dbReference>
<dbReference type="PANTHER" id="PTHR11735:SF14">
    <property type="entry name" value="TRNA N6-ADENOSINE THREONYLCARBAMOYLTRANSFERASE"/>
    <property type="match status" value="1"/>
</dbReference>
<dbReference type="Pfam" id="PF00814">
    <property type="entry name" value="TsaD"/>
    <property type="match status" value="1"/>
</dbReference>
<dbReference type="PRINTS" id="PR00789">
    <property type="entry name" value="OSIALOPTASE"/>
</dbReference>
<dbReference type="SUPFAM" id="SSF53067">
    <property type="entry name" value="Actin-like ATPase domain"/>
    <property type="match status" value="1"/>
</dbReference>
<dbReference type="PROSITE" id="PS01016">
    <property type="entry name" value="GLYCOPROTEASE"/>
    <property type="match status" value="1"/>
</dbReference>
<protein>
    <recommendedName>
        <fullName evidence="1">Probable tRNA N6-adenosine threonylcarbamoyltransferase</fullName>
        <ecNumber evidence="1">2.3.1.234</ecNumber>
    </recommendedName>
    <alternativeName>
        <fullName>N6-L-threonylcarbamoyladenine synthase</fullName>
        <shortName>t(6)A synthase</shortName>
    </alternativeName>
    <alternativeName>
        <fullName evidence="1">t(6)A37 threonylcarbamoyladenosine biosynthesis protein osgep</fullName>
    </alternativeName>
    <alternativeName>
        <fullName evidence="1">tRNA threonylcarbamoyladenosine biosynthesis protein osgep</fullName>
    </alternativeName>
</protein>
<accession>A7SXZ6</accession>
<keyword id="KW-0012">Acyltransferase</keyword>
<keyword id="KW-0963">Cytoplasm</keyword>
<keyword id="KW-0479">Metal-binding</keyword>
<keyword id="KW-0539">Nucleus</keyword>
<keyword id="KW-1185">Reference proteome</keyword>
<keyword id="KW-0808">Transferase</keyword>
<keyword id="KW-0819">tRNA processing</keyword>